<reference key="1">
    <citation type="journal article" date="1989" name="Biochem. Biophys. Res. Commun.">
        <title>Isolation, primary structure and bioactivity of schistoFLRF-amide, a FMRF-amide-like neuropeptide from the locust, Schistocerca gregaria.</title>
        <authorList>
            <person name="Robb S."/>
            <person name="Packman L.C."/>
            <person name="Evans P.D."/>
        </authorList>
    </citation>
    <scope>PROTEIN SEQUENCE</scope>
    <scope>AMIDATION AT PHE-10</scope>
    <scope>FUNCTION</scope>
    <source>
        <tissue>Thoracic nervous system</tissue>
    </source>
</reference>
<accession>P84307</accession>
<accession>P38553</accession>
<name>FARP_SCHGR</name>
<dbReference type="PIR" id="A32543">
    <property type="entry name" value="A32543"/>
</dbReference>
<dbReference type="GO" id="GO:0005576">
    <property type="term" value="C:extracellular region"/>
    <property type="evidence" value="ECO:0007669"/>
    <property type="project" value="UniProtKB-SubCell"/>
</dbReference>
<dbReference type="GO" id="GO:0007218">
    <property type="term" value="P:neuropeptide signaling pathway"/>
    <property type="evidence" value="ECO:0007669"/>
    <property type="project" value="UniProtKB-KW"/>
</dbReference>
<feature type="peptide" id="PRO_0000043683" description="SchistoFLRFamide" evidence="2">
    <location>
        <begin position="1"/>
        <end position="10"/>
    </location>
</feature>
<feature type="modified residue" description="Phenylalanine amide" evidence="2">
    <location>
        <position position="10"/>
    </location>
</feature>
<proteinExistence type="evidence at protein level"/>
<organism>
    <name type="scientific">Schistocerca gregaria</name>
    <name type="common">Desert locust</name>
    <name type="synonym">Gryllus gregarius</name>
    <dbReference type="NCBI Taxonomy" id="7010"/>
    <lineage>
        <taxon>Eukaryota</taxon>
        <taxon>Metazoa</taxon>
        <taxon>Ecdysozoa</taxon>
        <taxon>Arthropoda</taxon>
        <taxon>Hexapoda</taxon>
        <taxon>Insecta</taxon>
        <taxon>Pterygota</taxon>
        <taxon>Neoptera</taxon>
        <taxon>Polyneoptera</taxon>
        <taxon>Orthoptera</taxon>
        <taxon>Caelifera</taxon>
        <taxon>Acrididea</taxon>
        <taxon>Acridomorpha</taxon>
        <taxon>Acridoidea</taxon>
        <taxon>Acrididae</taxon>
        <taxon>Cyrtacanthacridinae</taxon>
        <taxon>Schistocerca</taxon>
    </lineage>
</organism>
<keyword id="KW-0027">Amidation</keyword>
<keyword id="KW-0903">Direct protein sequencing</keyword>
<keyword id="KW-0527">Neuropeptide</keyword>
<keyword id="KW-0964">Secreted</keyword>
<sequence length="10" mass="1244">PDVDHVFLRF</sequence>
<protein>
    <recommendedName>
        <fullName evidence="3">SchistoFLRFamide</fullName>
    </recommendedName>
    <alternativeName>
        <fullName evidence="3">Cardioexcitatory neuropeptide</fullName>
    </alternativeName>
    <alternativeName>
        <fullName evidence="1">PDVDHVFLRF-amide</fullName>
    </alternativeName>
</protein>
<evidence type="ECO:0000250" key="1">
    <source>
        <dbReference type="UniProtKB" id="P84306"/>
    </source>
</evidence>
<evidence type="ECO:0000269" key="2">
    <source>
    </source>
</evidence>
<evidence type="ECO:0000303" key="3">
    <source>
    </source>
</evidence>
<evidence type="ECO:0000305" key="4"/>
<comment type="function">
    <text evidence="2">Muscle inhibiting agent. Involved in the neural control of the visceral muscles of the heart, accessory glands and oviduct. May be involved in the regulation of saliva secretion.</text>
</comment>
<comment type="subcellular location">
    <subcellularLocation>
        <location>Secreted</location>
    </subcellularLocation>
</comment>
<comment type="similarity">
    <text evidence="4">Belongs to the FARP (FMRFamide related peptide) family.</text>
</comment>